<comment type="catalytic activity">
    <reaction evidence="2">
        <text>D-glyceraldehyde 3-phosphate + phosphate + NAD(+) = (2R)-3-phospho-glyceroyl phosphate + NADH + H(+)</text>
        <dbReference type="Rhea" id="RHEA:10300"/>
        <dbReference type="ChEBI" id="CHEBI:15378"/>
        <dbReference type="ChEBI" id="CHEBI:43474"/>
        <dbReference type="ChEBI" id="CHEBI:57540"/>
        <dbReference type="ChEBI" id="CHEBI:57604"/>
        <dbReference type="ChEBI" id="CHEBI:57945"/>
        <dbReference type="ChEBI" id="CHEBI:59776"/>
        <dbReference type="EC" id="1.2.1.12"/>
    </reaction>
</comment>
<comment type="pathway">
    <text>Carbohydrate degradation; glycolysis; pyruvate from D-glyceraldehyde 3-phosphate: step 1/5.</text>
</comment>
<comment type="subunit">
    <text>Homotetramer.</text>
</comment>
<comment type="subcellular location">
    <subcellularLocation>
        <location>Cytoplasm</location>
    </subcellularLocation>
</comment>
<comment type="similarity">
    <text evidence="3">Belongs to the glyceraldehyde-3-phosphate dehydrogenase family.</text>
</comment>
<proteinExistence type="evidence at protein level"/>
<accession>P10097</accession>
<name>G3PC_TRYBB</name>
<feature type="initiator methionine" description="Removed">
    <location>
        <position position="1"/>
    </location>
</feature>
<feature type="chain" id="PRO_0000145530" description="Glyceraldehyde-3-phosphate dehydrogenase, cytosolic">
    <location>
        <begin position="2"/>
        <end position="331"/>
    </location>
</feature>
<feature type="active site" description="Nucleophile" evidence="2">
    <location>
        <position position="150"/>
    </location>
</feature>
<feature type="binding site" evidence="1">
    <location>
        <begin position="12"/>
        <end position="13"/>
    </location>
    <ligand>
        <name>NAD(+)</name>
        <dbReference type="ChEBI" id="CHEBI:57540"/>
    </ligand>
</feature>
<feature type="binding site" evidence="1">
    <location>
        <position position="34"/>
    </location>
    <ligand>
        <name>NAD(+)</name>
        <dbReference type="ChEBI" id="CHEBI:57540"/>
    </ligand>
</feature>
<feature type="binding site" evidence="1">
    <location>
        <position position="78"/>
    </location>
    <ligand>
        <name>NAD(+)</name>
        <dbReference type="ChEBI" id="CHEBI:57540"/>
    </ligand>
</feature>
<feature type="binding site" evidence="1">
    <location>
        <begin position="149"/>
        <end position="151"/>
    </location>
    <ligand>
        <name>D-glyceraldehyde 3-phosphate</name>
        <dbReference type="ChEBI" id="CHEBI:59776"/>
    </ligand>
</feature>
<feature type="binding site" evidence="1">
    <location>
        <position position="180"/>
    </location>
    <ligand>
        <name>D-glyceraldehyde 3-phosphate</name>
        <dbReference type="ChEBI" id="CHEBI:59776"/>
    </ligand>
</feature>
<feature type="binding site" evidence="1">
    <location>
        <begin position="209"/>
        <end position="210"/>
    </location>
    <ligand>
        <name>D-glyceraldehyde 3-phosphate</name>
        <dbReference type="ChEBI" id="CHEBI:59776"/>
    </ligand>
</feature>
<feature type="binding site" evidence="1">
    <location>
        <position position="232"/>
    </location>
    <ligand>
        <name>D-glyceraldehyde 3-phosphate</name>
        <dbReference type="ChEBI" id="CHEBI:59776"/>
    </ligand>
</feature>
<feature type="binding site" evidence="1">
    <location>
        <position position="314"/>
    </location>
    <ligand>
        <name>NAD(+)</name>
        <dbReference type="ChEBI" id="CHEBI:57540"/>
    </ligand>
</feature>
<feature type="site" description="Activates thiol group during catalysis" evidence="1">
    <location>
        <position position="177"/>
    </location>
</feature>
<feature type="sequence variant">
    <original>R</original>
    <variation>I</variation>
    <location>
        <position position="73"/>
    </location>
</feature>
<feature type="sequence conflict" description="In Ref. 2; AA sequence." evidence="3" ref="2">
    <original>A</original>
    <variation>T</variation>
    <location>
        <position position="57"/>
    </location>
</feature>
<feature type="sequence conflict" description="In Ref. 2; AA sequence." evidence="3" ref="2">
    <original>Q</original>
    <variation>K</variation>
    <location>
        <position position="61"/>
    </location>
</feature>
<dbReference type="EC" id="1.2.1.12"/>
<dbReference type="EMBL" id="X53472">
    <property type="protein sequence ID" value="CAA37568.1"/>
    <property type="molecule type" value="Genomic_DNA"/>
</dbReference>
<dbReference type="PIR" id="S16091">
    <property type="entry name" value="DEUTGC"/>
</dbReference>
<dbReference type="SMR" id="P10097"/>
<dbReference type="SABIO-RK" id="P10097"/>
<dbReference type="UniPathway" id="UPA00109">
    <property type="reaction ID" value="UER00184"/>
</dbReference>
<dbReference type="GO" id="GO:0005737">
    <property type="term" value="C:cytoplasm"/>
    <property type="evidence" value="ECO:0000314"/>
    <property type="project" value="GeneDB"/>
</dbReference>
<dbReference type="GO" id="GO:0005829">
    <property type="term" value="C:cytosol"/>
    <property type="evidence" value="ECO:0000304"/>
    <property type="project" value="GeneDB"/>
</dbReference>
<dbReference type="GO" id="GO:0004365">
    <property type="term" value="F:glyceraldehyde-3-phosphate dehydrogenase (NAD+) (phosphorylating) activity"/>
    <property type="evidence" value="ECO:0000255"/>
    <property type="project" value="GeneDB"/>
</dbReference>
<dbReference type="GO" id="GO:0051287">
    <property type="term" value="F:NAD binding"/>
    <property type="evidence" value="ECO:0007669"/>
    <property type="project" value="InterPro"/>
</dbReference>
<dbReference type="GO" id="GO:0050661">
    <property type="term" value="F:NADP binding"/>
    <property type="evidence" value="ECO:0007669"/>
    <property type="project" value="InterPro"/>
</dbReference>
<dbReference type="GO" id="GO:0006006">
    <property type="term" value="P:glucose metabolic process"/>
    <property type="evidence" value="ECO:0007669"/>
    <property type="project" value="InterPro"/>
</dbReference>
<dbReference type="GO" id="GO:0006096">
    <property type="term" value="P:glycolytic process"/>
    <property type="evidence" value="ECO:0007669"/>
    <property type="project" value="UniProtKB-UniPathway"/>
</dbReference>
<dbReference type="CDD" id="cd18126">
    <property type="entry name" value="GAPDH_I_C"/>
    <property type="match status" value="1"/>
</dbReference>
<dbReference type="CDD" id="cd05214">
    <property type="entry name" value="GAPDH_I_N"/>
    <property type="match status" value="1"/>
</dbReference>
<dbReference type="FunFam" id="3.30.360.10:FF:000001">
    <property type="entry name" value="Glyceraldehyde-3-phosphate dehydrogenase"/>
    <property type="match status" value="1"/>
</dbReference>
<dbReference type="FunFam" id="3.40.50.720:FF:000001">
    <property type="entry name" value="Glyceraldehyde-3-phosphate dehydrogenase"/>
    <property type="match status" value="1"/>
</dbReference>
<dbReference type="Gene3D" id="3.30.360.10">
    <property type="entry name" value="Dihydrodipicolinate Reductase, domain 2"/>
    <property type="match status" value="1"/>
</dbReference>
<dbReference type="Gene3D" id="3.40.50.720">
    <property type="entry name" value="NAD(P)-binding Rossmann-like Domain"/>
    <property type="match status" value="1"/>
</dbReference>
<dbReference type="InterPro" id="IPR020831">
    <property type="entry name" value="GlycerAld/Erythrose_P_DH"/>
</dbReference>
<dbReference type="InterPro" id="IPR020830">
    <property type="entry name" value="GlycerAld_3-P_DH_AS"/>
</dbReference>
<dbReference type="InterPro" id="IPR020829">
    <property type="entry name" value="GlycerAld_3-P_DH_cat"/>
</dbReference>
<dbReference type="InterPro" id="IPR020828">
    <property type="entry name" value="GlycerAld_3-P_DH_NAD(P)-bd"/>
</dbReference>
<dbReference type="InterPro" id="IPR006424">
    <property type="entry name" value="Glyceraldehyde-3-P_DH_1"/>
</dbReference>
<dbReference type="InterPro" id="IPR036291">
    <property type="entry name" value="NAD(P)-bd_dom_sf"/>
</dbReference>
<dbReference type="NCBIfam" id="TIGR01534">
    <property type="entry name" value="GAPDH-I"/>
    <property type="match status" value="1"/>
</dbReference>
<dbReference type="PANTHER" id="PTHR10836">
    <property type="entry name" value="GLYCERALDEHYDE 3-PHOSPHATE DEHYDROGENASE"/>
    <property type="match status" value="1"/>
</dbReference>
<dbReference type="PANTHER" id="PTHR10836:SF76">
    <property type="entry name" value="GLYCERALDEHYDE-3-PHOSPHATE DEHYDROGENASE-RELATED"/>
    <property type="match status" value="1"/>
</dbReference>
<dbReference type="Pfam" id="PF02800">
    <property type="entry name" value="Gp_dh_C"/>
    <property type="match status" value="1"/>
</dbReference>
<dbReference type="Pfam" id="PF00044">
    <property type="entry name" value="Gp_dh_N"/>
    <property type="match status" value="1"/>
</dbReference>
<dbReference type="PIRSF" id="PIRSF000149">
    <property type="entry name" value="GAP_DH"/>
    <property type="match status" value="1"/>
</dbReference>
<dbReference type="PRINTS" id="PR00078">
    <property type="entry name" value="G3PDHDRGNASE"/>
</dbReference>
<dbReference type="SMART" id="SM00846">
    <property type="entry name" value="Gp_dh_N"/>
    <property type="match status" value="1"/>
</dbReference>
<dbReference type="SUPFAM" id="SSF55347">
    <property type="entry name" value="Glyceraldehyde-3-phosphate dehydrogenase-like, C-terminal domain"/>
    <property type="match status" value="1"/>
</dbReference>
<dbReference type="SUPFAM" id="SSF51735">
    <property type="entry name" value="NAD(P)-binding Rossmann-fold domains"/>
    <property type="match status" value="1"/>
</dbReference>
<dbReference type="PROSITE" id="PS00071">
    <property type="entry name" value="GAPDH"/>
    <property type="match status" value="1"/>
</dbReference>
<protein>
    <recommendedName>
        <fullName>Glyceraldehyde-3-phosphate dehydrogenase, cytosolic</fullName>
        <shortName>GAPDH</shortName>
        <ecNumber>1.2.1.12</ecNumber>
    </recommendedName>
</protein>
<evidence type="ECO:0000250" key="1"/>
<evidence type="ECO:0000255" key="2">
    <source>
        <dbReference type="PROSITE-ProRule" id="PRU10009"/>
    </source>
</evidence>
<evidence type="ECO:0000305" key="3"/>
<sequence length="331" mass="35635">MVIRVGINGFGRIGRVVFRAAQRRNDIEIVGINDLLDADYMAYMLKYDSTHGRFEGAVEVQGGALVVNGKKIRVTSERDPANLKWNEINVDVVVESTGLFLSDDTARKHIQAGAKKVVITGPSKDDTPMFVMGVNHTTYKGEAIVSNASCTTNCLAPLAKVLNDKFGIVEGLMTTVHATTATQKTVDGPSQKDWRGGRGAAQNIIPSSTGAAKAVGKIIPSLNGKLTGMAFRVPTPNVSVVDLTVRLERPATYKQICDAIKAASEGELKGILGYVDEEIVSSDINGIPLTSVFDARAGISLNDNFVKLVSWYDNETGYSNKVHDLIAHITK</sequence>
<organism>
    <name type="scientific">Trypanosoma brucei brucei</name>
    <dbReference type="NCBI Taxonomy" id="5702"/>
    <lineage>
        <taxon>Eukaryota</taxon>
        <taxon>Discoba</taxon>
        <taxon>Euglenozoa</taxon>
        <taxon>Kinetoplastea</taxon>
        <taxon>Metakinetoplastina</taxon>
        <taxon>Trypanosomatida</taxon>
        <taxon>Trypanosomatidae</taxon>
        <taxon>Trypanosoma</taxon>
    </lineage>
</organism>
<keyword id="KW-0963">Cytoplasm</keyword>
<keyword id="KW-0903">Direct protein sequencing</keyword>
<keyword id="KW-0324">Glycolysis</keyword>
<keyword id="KW-0520">NAD</keyword>
<keyword id="KW-0560">Oxidoreductase</keyword>
<reference key="1">
    <citation type="journal article" date="1991" name="Eur. J. Biochem.">
        <title>The cytosolic and glycosomal isoenzymes of glyceraldehyde-3-phosphate dehydrogenase in Trypanosoma brucei have a distant evolutionary relationship.</title>
        <authorList>
            <person name="Michels P.A.M."/>
            <person name="Marchand M."/>
            <person name="Kohl L."/>
            <person name="Allert S."/>
            <person name="Wierenga R.K."/>
            <person name="Opperdoes F.R."/>
        </authorList>
    </citation>
    <scope>NUCLEOTIDE SEQUENCE [GENOMIC DNA]</scope>
    <source>
        <strain>427</strain>
    </source>
</reference>
<reference key="2">
    <citation type="journal article" date="1987" name="Eur. J. Biochem.">
        <title>Glyceraldehyde-phosphate dehydrogenase from Trypanosoma brucei. Comparison of the glycosomal and cytosolic isoenzymes.</title>
        <authorList>
            <person name="Misset O."/>
            <person name="van Beeumen J."/>
            <person name="Lambeir A.-M."/>
            <person name="van der Meer R."/>
            <person name="Opperdoes F.R."/>
        </authorList>
    </citation>
    <scope>PRELIMINARY PROTEIN SEQUENCE OF 2-86</scope>
</reference>